<sequence>MRIDRFEFAFTFNDVILLPGKTEIEPSNVDLTTRIGNIALSIPILSSPMDTVTEEEMSIAMARMGGLGILHRNCSVEEQVNMAKAVKRAESFIIRDVITVSPEDSVEEARRLMREHGISGLPVIVGRKLVGIVTRRDVYFAENGSLLVKDIMTKDPITVGPEITPQEARKIMARYKIEKLPVVSESGELIGLVTAKDVFYRESHPFATRDEEGRLRVGAAISPFDIDRAKTLAPYVDVLVTDVAHFHNENVISATKRIIDEVGVPVIAGNIGTYEAAEEAITRLDIIGLRVGIGSGSICTTGEVTGVAAPTLYAVASASEAVRKYSKDVAVIADGGIRGPGEAAKAFAMGADAVMLGYALAGTKEAPGSTMMIGGKMYKIYRGMGSPSARSKRFAMDRYSKPSKDIAEGIEGLVPYRGDVTTVVDRFVAGLKAAFGYVGAANISEMKSKARVALISHSGMSEIAPHDVKPLEKISD</sequence>
<dbReference type="EC" id="1.1.1.205" evidence="1"/>
<dbReference type="EMBL" id="CP000968">
    <property type="protein sequence ID" value="ACB07824.1"/>
    <property type="molecule type" value="Genomic_DNA"/>
</dbReference>
<dbReference type="RefSeq" id="WP_012309721.1">
    <property type="nucleotide sequence ID" value="NC_010482.1"/>
</dbReference>
<dbReference type="SMR" id="B1L5U5"/>
<dbReference type="STRING" id="374847.Kcr_1078"/>
<dbReference type="EnsemblBacteria" id="ACB07824">
    <property type="protein sequence ID" value="ACB07824"/>
    <property type="gene ID" value="Kcr_1078"/>
</dbReference>
<dbReference type="GeneID" id="6094355"/>
<dbReference type="KEGG" id="kcr:Kcr_1078"/>
<dbReference type="eggNOG" id="arCOG00612">
    <property type="taxonomic scope" value="Archaea"/>
</dbReference>
<dbReference type="HOGENOM" id="CLU_022552_2_1_2"/>
<dbReference type="InParanoid" id="B1L5U5"/>
<dbReference type="OrthoDB" id="21361at2157"/>
<dbReference type="PhylomeDB" id="B1L5U5"/>
<dbReference type="UniPathway" id="UPA00601">
    <property type="reaction ID" value="UER00295"/>
</dbReference>
<dbReference type="Proteomes" id="UP000001686">
    <property type="component" value="Chromosome"/>
</dbReference>
<dbReference type="GO" id="GO:0003938">
    <property type="term" value="F:IMP dehydrogenase activity"/>
    <property type="evidence" value="ECO:0000318"/>
    <property type="project" value="GO_Central"/>
</dbReference>
<dbReference type="GO" id="GO:0046872">
    <property type="term" value="F:metal ion binding"/>
    <property type="evidence" value="ECO:0007669"/>
    <property type="project" value="UniProtKB-KW"/>
</dbReference>
<dbReference type="GO" id="GO:0006177">
    <property type="term" value="P:GMP biosynthetic process"/>
    <property type="evidence" value="ECO:0007669"/>
    <property type="project" value="UniProtKB-KW"/>
</dbReference>
<dbReference type="GO" id="GO:0006183">
    <property type="term" value="P:GTP biosynthetic process"/>
    <property type="evidence" value="ECO:0000318"/>
    <property type="project" value="GO_Central"/>
</dbReference>
<dbReference type="CDD" id="cd04601">
    <property type="entry name" value="CBS_pair_IMPDH"/>
    <property type="match status" value="1"/>
</dbReference>
<dbReference type="CDD" id="cd00381">
    <property type="entry name" value="IMPDH"/>
    <property type="match status" value="1"/>
</dbReference>
<dbReference type="FunFam" id="3.20.20.70:FF:000424">
    <property type="entry name" value="Inosine-5'-monophosphate dehydrogenase 2"/>
    <property type="match status" value="1"/>
</dbReference>
<dbReference type="Gene3D" id="3.20.20.70">
    <property type="entry name" value="Aldolase class I"/>
    <property type="match status" value="1"/>
</dbReference>
<dbReference type="InterPro" id="IPR013785">
    <property type="entry name" value="Aldolase_TIM"/>
</dbReference>
<dbReference type="InterPro" id="IPR000644">
    <property type="entry name" value="CBS_dom"/>
</dbReference>
<dbReference type="InterPro" id="IPR046342">
    <property type="entry name" value="CBS_dom_sf"/>
</dbReference>
<dbReference type="InterPro" id="IPR005990">
    <property type="entry name" value="IMP_DH"/>
</dbReference>
<dbReference type="InterPro" id="IPR015875">
    <property type="entry name" value="IMP_DH/GMP_Rdtase_CS"/>
</dbReference>
<dbReference type="InterPro" id="IPR001093">
    <property type="entry name" value="IMP_DH_GMPRt"/>
</dbReference>
<dbReference type="NCBIfam" id="TIGR01302">
    <property type="entry name" value="IMP_dehydrog"/>
    <property type="match status" value="1"/>
</dbReference>
<dbReference type="PANTHER" id="PTHR11911:SF111">
    <property type="entry name" value="INOSINE-5'-MONOPHOSPHATE DEHYDROGENASE"/>
    <property type="match status" value="1"/>
</dbReference>
<dbReference type="PANTHER" id="PTHR11911">
    <property type="entry name" value="INOSINE-5-MONOPHOSPHATE DEHYDROGENASE RELATED"/>
    <property type="match status" value="1"/>
</dbReference>
<dbReference type="Pfam" id="PF00571">
    <property type="entry name" value="CBS"/>
    <property type="match status" value="2"/>
</dbReference>
<dbReference type="Pfam" id="PF00478">
    <property type="entry name" value="IMPDH"/>
    <property type="match status" value="1"/>
</dbReference>
<dbReference type="PIRSF" id="PIRSF000130">
    <property type="entry name" value="IMPDH"/>
    <property type="match status" value="1"/>
</dbReference>
<dbReference type="SMART" id="SM00116">
    <property type="entry name" value="CBS"/>
    <property type="match status" value="2"/>
</dbReference>
<dbReference type="SMART" id="SM01240">
    <property type="entry name" value="IMPDH"/>
    <property type="match status" value="1"/>
</dbReference>
<dbReference type="SUPFAM" id="SSF54631">
    <property type="entry name" value="CBS-domain pair"/>
    <property type="match status" value="1"/>
</dbReference>
<dbReference type="SUPFAM" id="SSF51412">
    <property type="entry name" value="Inosine monophosphate dehydrogenase (IMPDH)"/>
    <property type="match status" value="1"/>
</dbReference>
<dbReference type="PROSITE" id="PS51371">
    <property type="entry name" value="CBS"/>
    <property type="match status" value="2"/>
</dbReference>
<dbReference type="PROSITE" id="PS00487">
    <property type="entry name" value="IMP_DH_GMP_RED"/>
    <property type="match status" value="1"/>
</dbReference>
<comment type="function">
    <text evidence="1">Catalyzes the conversion of inosine 5'-phosphate (IMP) to xanthosine 5'-phosphate (XMP), the first committed and rate-limiting step in the de novo synthesis of guanine nucleotides, and therefore plays an important role in the regulation of cell growth.</text>
</comment>
<comment type="catalytic activity">
    <reaction evidence="1">
        <text>IMP + NAD(+) + H2O = XMP + NADH + H(+)</text>
        <dbReference type="Rhea" id="RHEA:11708"/>
        <dbReference type="ChEBI" id="CHEBI:15377"/>
        <dbReference type="ChEBI" id="CHEBI:15378"/>
        <dbReference type="ChEBI" id="CHEBI:57464"/>
        <dbReference type="ChEBI" id="CHEBI:57540"/>
        <dbReference type="ChEBI" id="CHEBI:57945"/>
        <dbReference type="ChEBI" id="CHEBI:58053"/>
        <dbReference type="EC" id="1.1.1.205"/>
    </reaction>
</comment>
<comment type="cofactor">
    <cofactor evidence="1">
        <name>K(+)</name>
        <dbReference type="ChEBI" id="CHEBI:29103"/>
    </cofactor>
</comment>
<comment type="activity regulation">
    <text evidence="1">Mycophenolic acid (MPA) is a non-competitive inhibitor that prevents formation of the closed enzyme conformation by binding to the same site as the amobile flap. In contrast, mizoribine monophosphate (MZP) is a competitive inhibitor that induces the closed conformation. MPA is a potent inhibitor of mammalian IMPDHs but a poor inhibitor of the bacterial enzymes. MZP is a more potent inhibitor of bacterial IMPDH.</text>
</comment>
<comment type="pathway">
    <text evidence="1">Purine metabolism; XMP biosynthesis via de novo pathway; XMP from IMP: step 1/1.</text>
</comment>
<comment type="subunit">
    <text evidence="1">Homotetramer.</text>
</comment>
<comment type="similarity">
    <text evidence="5">Belongs to the IMPDH/GMPR family.</text>
</comment>
<reference key="1">
    <citation type="journal article" date="2008" name="Proc. Natl. Acad. Sci. U.S.A.">
        <title>A korarchaeal genome reveals new insights into the evolution of the Archaea.</title>
        <authorList>
            <person name="Elkins J.G."/>
            <person name="Podar M."/>
            <person name="Graham D.E."/>
            <person name="Makarova K.S."/>
            <person name="Wolf Y."/>
            <person name="Randau L."/>
            <person name="Hedlund B.P."/>
            <person name="Brochier-Armanet C."/>
            <person name="Kunin V."/>
            <person name="Anderson I."/>
            <person name="Lapidus A."/>
            <person name="Goltsman E."/>
            <person name="Barry K."/>
            <person name="Koonin E.V."/>
            <person name="Hugenholtz P."/>
            <person name="Kyrpides N."/>
            <person name="Wanner G."/>
            <person name="Richardson P."/>
            <person name="Keller M."/>
            <person name="Stetter K.O."/>
        </authorList>
    </citation>
    <scope>NUCLEOTIDE SEQUENCE [LARGE SCALE GENOMIC DNA]</scope>
    <source>
        <strain>OPF8</strain>
    </source>
</reference>
<keyword id="KW-0129">CBS domain</keyword>
<keyword id="KW-0332">GMP biosynthesis</keyword>
<keyword id="KW-0479">Metal-binding</keyword>
<keyword id="KW-0520">NAD</keyword>
<keyword id="KW-0560">Oxidoreductase</keyword>
<keyword id="KW-0630">Potassium</keyword>
<keyword id="KW-0658">Purine biosynthesis</keyword>
<keyword id="KW-1185">Reference proteome</keyword>
<keyword id="KW-0677">Repeat</keyword>
<proteinExistence type="inferred from homology"/>
<accession>B1L5U5</accession>
<gene>
    <name evidence="1" type="primary">guaB</name>
    <name type="ordered locus">Kcr_1078</name>
</gene>
<evidence type="ECO:0000250" key="1">
    <source>
        <dbReference type="UniProtKB" id="P0ADG7"/>
    </source>
</evidence>
<evidence type="ECO:0000250" key="2">
    <source>
        <dbReference type="UniProtKB" id="P50097"/>
    </source>
</evidence>
<evidence type="ECO:0000250" key="3">
    <source>
        <dbReference type="UniProtKB" id="P9WKI7"/>
    </source>
</evidence>
<evidence type="ECO:0000255" key="4">
    <source>
        <dbReference type="PROSITE-ProRule" id="PRU00703"/>
    </source>
</evidence>
<evidence type="ECO:0000305" key="5"/>
<organism>
    <name type="scientific">Korarchaeum cryptofilum (strain OPF8)</name>
    <dbReference type="NCBI Taxonomy" id="374847"/>
    <lineage>
        <taxon>Archaea</taxon>
        <taxon>Thermoproteota</taxon>
        <taxon>Candidatus Korarchaeia</taxon>
        <taxon>Candidatus Korarchaeales</taxon>
        <taxon>Candidatus Korarchaeaceae</taxon>
        <taxon>Candidatus Korarchaeum</taxon>
    </lineage>
</organism>
<name>IMDH_KORCO</name>
<protein>
    <recommendedName>
        <fullName evidence="1">Inosine-5'-monophosphate dehydrogenase</fullName>
        <shortName evidence="1">IMP dehydrogenase</shortName>
        <shortName evidence="1">IMPD</shortName>
        <shortName evidence="1">IMPDH</shortName>
        <ecNumber evidence="1">1.1.1.205</ecNumber>
    </recommendedName>
</protein>
<feature type="chain" id="PRO_0000415693" description="Inosine-5'-monophosphate dehydrogenase">
    <location>
        <begin position="1"/>
        <end position="476"/>
    </location>
</feature>
<feature type="domain" description="CBS 1" evidence="4">
    <location>
        <begin position="93"/>
        <end position="151"/>
    </location>
</feature>
<feature type="domain" description="CBS 2" evidence="4">
    <location>
        <begin position="152"/>
        <end position="211"/>
    </location>
</feature>
<feature type="active site" description="Thioimidate intermediate" evidence="2">
    <location>
        <position position="299"/>
    </location>
</feature>
<feature type="active site" description="Proton acceptor" evidence="3">
    <location>
        <position position="398"/>
    </location>
</feature>
<feature type="binding site" evidence="2">
    <location>
        <position position="242"/>
    </location>
    <ligand>
        <name>NAD(+)</name>
        <dbReference type="ChEBI" id="CHEBI:57540"/>
    </ligand>
</feature>
<feature type="binding site" evidence="2">
    <location>
        <begin position="292"/>
        <end position="294"/>
    </location>
    <ligand>
        <name>NAD(+)</name>
        <dbReference type="ChEBI" id="CHEBI:57540"/>
    </ligand>
</feature>
<feature type="binding site" description="in other chain" evidence="2">
    <location>
        <position position="294"/>
    </location>
    <ligand>
        <name>K(+)</name>
        <dbReference type="ChEBI" id="CHEBI:29103"/>
        <note>ligand shared between two tetrameric partners</note>
    </ligand>
</feature>
<feature type="binding site" description="in other chain" evidence="2">
    <location>
        <position position="296"/>
    </location>
    <ligand>
        <name>K(+)</name>
        <dbReference type="ChEBI" id="CHEBI:29103"/>
        <note>ligand shared between two tetrameric partners</note>
    </ligand>
</feature>
<feature type="binding site" evidence="2">
    <location>
        <position position="297"/>
    </location>
    <ligand>
        <name>IMP</name>
        <dbReference type="ChEBI" id="CHEBI:58053"/>
    </ligand>
</feature>
<feature type="binding site" description="in other chain" evidence="2">
    <location>
        <position position="299"/>
    </location>
    <ligand>
        <name>K(+)</name>
        <dbReference type="ChEBI" id="CHEBI:29103"/>
        <note>ligand shared between two tetrameric partners</note>
    </ligand>
</feature>
<feature type="binding site" evidence="2">
    <location>
        <begin position="334"/>
        <end position="336"/>
    </location>
    <ligand>
        <name>IMP</name>
        <dbReference type="ChEBI" id="CHEBI:58053"/>
    </ligand>
</feature>
<feature type="binding site" evidence="2">
    <location>
        <begin position="357"/>
        <end position="358"/>
    </location>
    <ligand>
        <name>IMP</name>
        <dbReference type="ChEBI" id="CHEBI:58053"/>
    </ligand>
</feature>
<feature type="binding site" evidence="2">
    <location>
        <begin position="381"/>
        <end position="385"/>
    </location>
    <ligand>
        <name>IMP</name>
        <dbReference type="ChEBI" id="CHEBI:58053"/>
    </ligand>
</feature>
<feature type="binding site" evidence="2">
    <location>
        <position position="408"/>
    </location>
    <ligand>
        <name>IMP</name>
        <dbReference type="ChEBI" id="CHEBI:58053"/>
    </ligand>
</feature>
<feature type="binding site" evidence="2">
    <location>
        <position position="462"/>
    </location>
    <ligand>
        <name>K(+)</name>
        <dbReference type="ChEBI" id="CHEBI:29103"/>
        <note>ligand shared between two tetrameric partners</note>
    </ligand>
</feature>